<proteinExistence type="inferred from homology"/>
<sequence length="364" mass="40431">MSATPLVSQVDSHNPEKSKLIPPLLGASVAELSAWVQQQGQPAYRGKQLHEWIYDKGVRSLADISVFSKQWRAEVAEIPIGRSTLHYRSVAPDGTVKYLLRLTDGQIIETVGIPTFAERGEGPKARLTVCVSTQVGCPMACDFCATGKGGYKRNLARHEIIDQVLTVQEDFQQRVSNVVFMGLGEPLLNTENVLAALKSLNQDIGIGQRSLTVSTVGIRDRIRQFAQNNLQITLAVSLHAPNQALREKLIPSARAYPLEELLAECREYVEITGRRVTFEYVLLAGVNDLPEHALELSKCMRGFQSHVNLIPYNPIQEVDYKRPNRDRIEAFVNVLKQQNTAVSVRYSRGLEADAACGQLRASKN</sequence>
<evidence type="ECO:0000255" key="1">
    <source>
        <dbReference type="HAMAP-Rule" id="MF_01849"/>
    </source>
</evidence>
<evidence type="ECO:0000255" key="2">
    <source>
        <dbReference type="PROSITE-ProRule" id="PRU01266"/>
    </source>
</evidence>
<accession>B2J6D0</accession>
<feature type="chain" id="PRO_0000350290" description="Probable dual-specificity RNA methyltransferase RlmN">
    <location>
        <begin position="1"/>
        <end position="364"/>
    </location>
</feature>
<feature type="domain" description="Radical SAM core" evidence="2">
    <location>
        <begin position="123"/>
        <end position="351"/>
    </location>
</feature>
<feature type="active site" description="Proton acceptor" evidence="1">
    <location>
        <position position="109"/>
    </location>
</feature>
<feature type="active site" description="S-methylcysteine intermediate" evidence="1">
    <location>
        <position position="356"/>
    </location>
</feature>
<feature type="binding site" evidence="1">
    <location>
        <position position="137"/>
    </location>
    <ligand>
        <name>[4Fe-4S] cluster</name>
        <dbReference type="ChEBI" id="CHEBI:49883"/>
        <note>4Fe-4S-S-AdoMet</note>
    </ligand>
</feature>
<feature type="binding site" evidence="1">
    <location>
        <position position="141"/>
    </location>
    <ligand>
        <name>[4Fe-4S] cluster</name>
        <dbReference type="ChEBI" id="CHEBI:49883"/>
        <note>4Fe-4S-S-AdoMet</note>
    </ligand>
</feature>
<feature type="binding site" evidence="1">
    <location>
        <position position="144"/>
    </location>
    <ligand>
        <name>[4Fe-4S] cluster</name>
        <dbReference type="ChEBI" id="CHEBI:49883"/>
        <note>4Fe-4S-S-AdoMet</note>
    </ligand>
</feature>
<feature type="binding site" evidence="1">
    <location>
        <begin position="184"/>
        <end position="185"/>
    </location>
    <ligand>
        <name>S-adenosyl-L-methionine</name>
        <dbReference type="ChEBI" id="CHEBI:59789"/>
    </ligand>
</feature>
<feature type="binding site" evidence="1">
    <location>
        <position position="214"/>
    </location>
    <ligand>
        <name>S-adenosyl-L-methionine</name>
        <dbReference type="ChEBI" id="CHEBI:59789"/>
    </ligand>
</feature>
<feature type="binding site" evidence="1">
    <location>
        <begin position="237"/>
        <end position="239"/>
    </location>
    <ligand>
        <name>S-adenosyl-L-methionine</name>
        <dbReference type="ChEBI" id="CHEBI:59789"/>
    </ligand>
</feature>
<feature type="binding site" evidence="1">
    <location>
        <position position="313"/>
    </location>
    <ligand>
        <name>S-adenosyl-L-methionine</name>
        <dbReference type="ChEBI" id="CHEBI:59789"/>
    </ligand>
</feature>
<feature type="disulfide bond" description="(transient)" evidence="1">
    <location>
        <begin position="130"/>
        <end position="356"/>
    </location>
</feature>
<dbReference type="EC" id="2.1.1.192" evidence="1"/>
<dbReference type="EMBL" id="CP001037">
    <property type="protein sequence ID" value="ACC82335.1"/>
    <property type="molecule type" value="Genomic_DNA"/>
</dbReference>
<dbReference type="RefSeq" id="WP_012410303.1">
    <property type="nucleotide sequence ID" value="NC_010628.1"/>
</dbReference>
<dbReference type="SMR" id="B2J6D0"/>
<dbReference type="STRING" id="63737.Npun_F3954"/>
<dbReference type="EnsemblBacteria" id="ACC82335">
    <property type="protein sequence ID" value="ACC82335"/>
    <property type="gene ID" value="Npun_F3954"/>
</dbReference>
<dbReference type="KEGG" id="npu:Npun_F3954"/>
<dbReference type="eggNOG" id="COG0820">
    <property type="taxonomic scope" value="Bacteria"/>
</dbReference>
<dbReference type="HOGENOM" id="CLU_029101_1_1_3"/>
<dbReference type="OrthoDB" id="9793973at2"/>
<dbReference type="PhylomeDB" id="B2J6D0"/>
<dbReference type="Proteomes" id="UP000001191">
    <property type="component" value="Chromosome"/>
</dbReference>
<dbReference type="GO" id="GO:0005737">
    <property type="term" value="C:cytoplasm"/>
    <property type="evidence" value="ECO:0007669"/>
    <property type="project" value="UniProtKB-SubCell"/>
</dbReference>
<dbReference type="GO" id="GO:0051539">
    <property type="term" value="F:4 iron, 4 sulfur cluster binding"/>
    <property type="evidence" value="ECO:0007669"/>
    <property type="project" value="UniProtKB-UniRule"/>
</dbReference>
<dbReference type="GO" id="GO:0046872">
    <property type="term" value="F:metal ion binding"/>
    <property type="evidence" value="ECO:0007669"/>
    <property type="project" value="UniProtKB-KW"/>
</dbReference>
<dbReference type="GO" id="GO:0070040">
    <property type="term" value="F:rRNA (adenine(2503)-C2-)-methyltransferase activity"/>
    <property type="evidence" value="ECO:0007669"/>
    <property type="project" value="UniProtKB-UniRule"/>
</dbReference>
<dbReference type="GO" id="GO:0019843">
    <property type="term" value="F:rRNA binding"/>
    <property type="evidence" value="ECO:0007669"/>
    <property type="project" value="UniProtKB-UniRule"/>
</dbReference>
<dbReference type="GO" id="GO:0002935">
    <property type="term" value="F:tRNA (adenine(37)-C2)-methyltransferase activity"/>
    <property type="evidence" value="ECO:0007669"/>
    <property type="project" value="UniProtKB-UniRule"/>
</dbReference>
<dbReference type="GO" id="GO:0000049">
    <property type="term" value="F:tRNA binding"/>
    <property type="evidence" value="ECO:0007669"/>
    <property type="project" value="UniProtKB-UniRule"/>
</dbReference>
<dbReference type="GO" id="GO:0070475">
    <property type="term" value="P:rRNA base methylation"/>
    <property type="evidence" value="ECO:0007669"/>
    <property type="project" value="UniProtKB-UniRule"/>
</dbReference>
<dbReference type="GO" id="GO:0030488">
    <property type="term" value="P:tRNA methylation"/>
    <property type="evidence" value="ECO:0007669"/>
    <property type="project" value="UniProtKB-UniRule"/>
</dbReference>
<dbReference type="CDD" id="cd01335">
    <property type="entry name" value="Radical_SAM"/>
    <property type="match status" value="1"/>
</dbReference>
<dbReference type="FunFam" id="3.20.20.70:FF:000014">
    <property type="entry name" value="Probable dual-specificity RNA methyltransferase RlmN"/>
    <property type="match status" value="1"/>
</dbReference>
<dbReference type="Gene3D" id="1.10.150.530">
    <property type="match status" value="1"/>
</dbReference>
<dbReference type="Gene3D" id="3.20.20.70">
    <property type="entry name" value="Aldolase class I"/>
    <property type="match status" value="1"/>
</dbReference>
<dbReference type="HAMAP" id="MF_01849">
    <property type="entry name" value="RNA_methyltr_RlmN"/>
    <property type="match status" value="1"/>
</dbReference>
<dbReference type="InterPro" id="IPR013785">
    <property type="entry name" value="Aldolase_TIM"/>
</dbReference>
<dbReference type="InterPro" id="IPR040072">
    <property type="entry name" value="Methyltransferase_A"/>
</dbReference>
<dbReference type="InterPro" id="IPR048641">
    <property type="entry name" value="RlmN_N"/>
</dbReference>
<dbReference type="InterPro" id="IPR027492">
    <property type="entry name" value="RNA_MTrfase_RlmN"/>
</dbReference>
<dbReference type="InterPro" id="IPR004383">
    <property type="entry name" value="rRNA_lsu_MTrfase_RlmN/Cfr"/>
</dbReference>
<dbReference type="InterPro" id="IPR007197">
    <property type="entry name" value="rSAM"/>
</dbReference>
<dbReference type="NCBIfam" id="TIGR00048">
    <property type="entry name" value="rRNA_mod_RlmN"/>
    <property type="match status" value="1"/>
</dbReference>
<dbReference type="PANTHER" id="PTHR30544">
    <property type="entry name" value="23S RRNA METHYLTRANSFERASE"/>
    <property type="match status" value="1"/>
</dbReference>
<dbReference type="PANTHER" id="PTHR30544:SF5">
    <property type="entry name" value="RADICAL SAM CORE DOMAIN-CONTAINING PROTEIN"/>
    <property type="match status" value="1"/>
</dbReference>
<dbReference type="Pfam" id="PF04055">
    <property type="entry name" value="Radical_SAM"/>
    <property type="match status" value="1"/>
</dbReference>
<dbReference type="Pfam" id="PF21016">
    <property type="entry name" value="RlmN_N"/>
    <property type="match status" value="1"/>
</dbReference>
<dbReference type="PIRSF" id="PIRSF006004">
    <property type="entry name" value="CHP00048"/>
    <property type="match status" value="1"/>
</dbReference>
<dbReference type="SFLD" id="SFLDF00275">
    <property type="entry name" value="adenosine_C2_methyltransferase"/>
    <property type="match status" value="1"/>
</dbReference>
<dbReference type="SFLD" id="SFLDS00029">
    <property type="entry name" value="Radical_SAM"/>
    <property type="match status" value="1"/>
</dbReference>
<dbReference type="SUPFAM" id="SSF102114">
    <property type="entry name" value="Radical SAM enzymes"/>
    <property type="match status" value="1"/>
</dbReference>
<dbReference type="PROSITE" id="PS51918">
    <property type="entry name" value="RADICAL_SAM"/>
    <property type="match status" value="1"/>
</dbReference>
<name>RLMN_NOSP7</name>
<keyword id="KW-0004">4Fe-4S</keyword>
<keyword id="KW-0963">Cytoplasm</keyword>
<keyword id="KW-1015">Disulfide bond</keyword>
<keyword id="KW-0408">Iron</keyword>
<keyword id="KW-0411">Iron-sulfur</keyword>
<keyword id="KW-0479">Metal-binding</keyword>
<keyword id="KW-0489">Methyltransferase</keyword>
<keyword id="KW-1185">Reference proteome</keyword>
<keyword id="KW-0698">rRNA processing</keyword>
<keyword id="KW-0949">S-adenosyl-L-methionine</keyword>
<keyword id="KW-0808">Transferase</keyword>
<keyword id="KW-0819">tRNA processing</keyword>
<gene>
    <name evidence="1" type="primary">rlmN</name>
    <name type="ordered locus">Npun_F3954</name>
</gene>
<reference key="1">
    <citation type="journal article" date="2013" name="Plant Physiol.">
        <title>A Nostoc punctiforme Sugar Transporter Necessary to Establish a Cyanobacterium-Plant Symbiosis.</title>
        <authorList>
            <person name="Ekman M."/>
            <person name="Picossi S."/>
            <person name="Campbell E.L."/>
            <person name="Meeks J.C."/>
            <person name="Flores E."/>
        </authorList>
    </citation>
    <scope>NUCLEOTIDE SEQUENCE [LARGE SCALE GENOMIC DNA]</scope>
    <source>
        <strain>ATCC 29133 / PCC 73102</strain>
    </source>
</reference>
<organism>
    <name type="scientific">Nostoc punctiforme (strain ATCC 29133 / PCC 73102)</name>
    <dbReference type="NCBI Taxonomy" id="63737"/>
    <lineage>
        <taxon>Bacteria</taxon>
        <taxon>Bacillati</taxon>
        <taxon>Cyanobacteriota</taxon>
        <taxon>Cyanophyceae</taxon>
        <taxon>Nostocales</taxon>
        <taxon>Nostocaceae</taxon>
        <taxon>Nostoc</taxon>
    </lineage>
</organism>
<comment type="function">
    <text evidence="1">Specifically methylates position 2 of adenine 2503 in 23S rRNA and position 2 of adenine 37 in tRNAs.</text>
</comment>
<comment type="catalytic activity">
    <reaction evidence="1">
        <text>adenosine(2503) in 23S rRNA + 2 reduced [2Fe-2S]-[ferredoxin] + 2 S-adenosyl-L-methionine = 2-methyladenosine(2503) in 23S rRNA + 5'-deoxyadenosine + L-methionine + 2 oxidized [2Fe-2S]-[ferredoxin] + S-adenosyl-L-homocysteine</text>
        <dbReference type="Rhea" id="RHEA:42916"/>
        <dbReference type="Rhea" id="RHEA-COMP:10000"/>
        <dbReference type="Rhea" id="RHEA-COMP:10001"/>
        <dbReference type="Rhea" id="RHEA-COMP:10152"/>
        <dbReference type="Rhea" id="RHEA-COMP:10282"/>
        <dbReference type="ChEBI" id="CHEBI:17319"/>
        <dbReference type="ChEBI" id="CHEBI:33737"/>
        <dbReference type="ChEBI" id="CHEBI:33738"/>
        <dbReference type="ChEBI" id="CHEBI:57844"/>
        <dbReference type="ChEBI" id="CHEBI:57856"/>
        <dbReference type="ChEBI" id="CHEBI:59789"/>
        <dbReference type="ChEBI" id="CHEBI:74411"/>
        <dbReference type="ChEBI" id="CHEBI:74497"/>
        <dbReference type="EC" id="2.1.1.192"/>
    </reaction>
</comment>
<comment type="catalytic activity">
    <reaction evidence="1">
        <text>adenosine(37) in tRNA + 2 reduced [2Fe-2S]-[ferredoxin] + 2 S-adenosyl-L-methionine = 2-methyladenosine(37) in tRNA + 5'-deoxyadenosine + L-methionine + 2 oxidized [2Fe-2S]-[ferredoxin] + S-adenosyl-L-homocysteine</text>
        <dbReference type="Rhea" id="RHEA:43332"/>
        <dbReference type="Rhea" id="RHEA-COMP:10000"/>
        <dbReference type="Rhea" id="RHEA-COMP:10001"/>
        <dbReference type="Rhea" id="RHEA-COMP:10162"/>
        <dbReference type="Rhea" id="RHEA-COMP:10485"/>
        <dbReference type="ChEBI" id="CHEBI:17319"/>
        <dbReference type="ChEBI" id="CHEBI:33737"/>
        <dbReference type="ChEBI" id="CHEBI:33738"/>
        <dbReference type="ChEBI" id="CHEBI:57844"/>
        <dbReference type="ChEBI" id="CHEBI:57856"/>
        <dbReference type="ChEBI" id="CHEBI:59789"/>
        <dbReference type="ChEBI" id="CHEBI:74411"/>
        <dbReference type="ChEBI" id="CHEBI:74497"/>
        <dbReference type="EC" id="2.1.1.192"/>
    </reaction>
</comment>
<comment type="cofactor">
    <cofactor evidence="1">
        <name>[4Fe-4S] cluster</name>
        <dbReference type="ChEBI" id="CHEBI:49883"/>
    </cofactor>
    <text evidence="1">Binds 1 [4Fe-4S] cluster. The cluster is coordinated with 3 cysteines and an exchangeable S-adenosyl-L-methionine.</text>
</comment>
<comment type="subcellular location">
    <subcellularLocation>
        <location evidence="1">Cytoplasm</location>
    </subcellularLocation>
</comment>
<comment type="miscellaneous">
    <text evidence="1">Reaction proceeds by a ping-pong mechanism involving intermediate methylation of a conserved cysteine residue.</text>
</comment>
<comment type="similarity">
    <text evidence="1">Belongs to the radical SAM superfamily. RlmN family.</text>
</comment>
<protein>
    <recommendedName>
        <fullName evidence="1">Probable dual-specificity RNA methyltransferase RlmN</fullName>
        <ecNumber evidence="1">2.1.1.192</ecNumber>
    </recommendedName>
    <alternativeName>
        <fullName evidence="1">23S rRNA (adenine(2503)-C(2))-methyltransferase</fullName>
    </alternativeName>
    <alternativeName>
        <fullName evidence="1">23S rRNA m2A2503 methyltransferase</fullName>
    </alternativeName>
    <alternativeName>
        <fullName evidence="1">Ribosomal RNA large subunit methyltransferase N</fullName>
    </alternativeName>
    <alternativeName>
        <fullName evidence="1">tRNA (adenine(37)-C(2))-methyltransferase</fullName>
    </alternativeName>
    <alternativeName>
        <fullName evidence="1">tRNA m2A37 methyltransferase</fullName>
    </alternativeName>
</protein>